<reference key="1">
    <citation type="journal article" date="1999" name="J. Mol. Evol.">
        <title>Dynamic diversification from a putative common ancestor of scorpion toxins affecting sodium, potassium, and chloride channels.</title>
        <authorList>
            <person name="Froy O."/>
            <person name="Sagiv T."/>
            <person name="Poreh M."/>
            <person name="Urbach D."/>
            <person name="Zilberberg N."/>
            <person name="Gurevitz M."/>
        </authorList>
    </citation>
    <scope>NUCLEOTIDE SEQUENCE [GENOMIC DNA]</scope>
</reference>
<reference key="2">
    <citation type="journal article" date="2006" name="Toxicon">
        <title>Moving pieces in a taxonomic puzzle: venom 2D-LC/MS and data clustering analyses to infer phylogenetic relationships in some scorpions from the Buthidae family (Scorpiones).</title>
        <authorList>
            <person name="Nascimento D.G."/>
            <person name="Rates B."/>
            <person name="Santos D.M."/>
            <person name="Verano-Braga T."/>
            <person name="Barbosa-Silva A."/>
            <person name="Dutra A.A.A."/>
            <person name="Biondi I."/>
            <person name="Martin-Eauclaire M.-F."/>
            <person name="De Lima M.E."/>
            <person name="Pimenta A.M.C."/>
        </authorList>
    </citation>
    <scope>IDENTIFICATION BY MASS SPECTROMETRY</scope>
</reference>
<evidence type="ECO:0000250" key="1"/>
<evidence type="ECO:0000255" key="2">
    <source>
        <dbReference type="PROSITE-ProRule" id="PRU01210"/>
    </source>
</evidence>
<evidence type="ECO:0000305" key="3"/>
<protein>
    <recommendedName>
        <fullName>Insect toxin 2-13</fullName>
    </recommendedName>
    <alternativeName>
        <fullName>LqhIT2-13</fullName>
    </alternativeName>
</protein>
<sequence length="83" mass="9211">MKLLLLLIITASMLIEGLVNADVYIRRHDGCKISCTVNDKYCDNECKSEGGSYGYCYAFGCWCEGLPNDKAWKSETNTCGGKK</sequence>
<proteinExistence type="evidence at protein level"/>
<organism>
    <name type="scientific">Leiurus hebraeus</name>
    <name type="common">Hebrew deathstalker scorpion</name>
    <name type="synonym">Leiurus quinquestriatus hebraeus</name>
    <dbReference type="NCBI Taxonomy" id="2899558"/>
    <lineage>
        <taxon>Eukaryota</taxon>
        <taxon>Metazoa</taxon>
        <taxon>Ecdysozoa</taxon>
        <taxon>Arthropoda</taxon>
        <taxon>Chelicerata</taxon>
        <taxon>Arachnida</taxon>
        <taxon>Scorpiones</taxon>
        <taxon>Buthida</taxon>
        <taxon>Buthoidea</taxon>
        <taxon>Buthidae</taxon>
        <taxon>Leiurus</taxon>
    </lineage>
</organism>
<comment type="function">
    <text evidence="1">Depressant insect toxins cause a transient contraction paralysis followed by a slow flaccid paralysis. They bind voltage-independently to sodium channels (Nav) and block action potentials, primarily by depolarizing the axonal membrane and suppressing the sodium current (By similarity).</text>
</comment>
<comment type="subcellular location">
    <subcellularLocation>
        <location>Secreted</location>
    </subcellularLocation>
</comment>
<comment type="tissue specificity">
    <text>Expressed by the venom gland.</text>
</comment>
<comment type="domain">
    <text evidence="3">Has the structural arrangement of an alpha-helix connected to antiparallel beta-sheets by disulfide bonds (CS-alpha/beta).</text>
</comment>
<comment type="similarity">
    <text evidence="3">Belongs to the long (4 C-C) scorpion toxin superfamily. Sodium channel inhibitor family. Beta subfamily.</text>
</comment>
<keyword id="KW-0027">Amidation</keyword>
<keyword id="KW-1015">Disulfide bond</keyword>
<keyword id="KW-0872">Ion channel impairing toxin</keyword>
<keyword id="KW-0528">Neurotoxin</keyword>
<keyword id="KW-0964">Secreted</keyword>
<keyword id="KW-0732">Signal</keyword>
<keyword id="KW-0800">Toxin</keyword>
<keyword id="KW-0738">Voltage-gated sodium channel impairing toxin</keyword>
<name>SX21_LEIHE</name>
<dbReference type="SMR" id="P68725"/>
<dbReference type="GO" id="GO:0005576">
    <property type="term" value="C:extracellular region"/>
    <property type="evidence" value="ECO:0007669"/>
    <property type="project" value="UniProtKB-SubCell"/>
</dbReference>
<dbReference type="GO" id="GO:0019871">
    <property type="term" value="F:sodium channel inhibitor activity"/>
    <property type="evidence" value="ECO:0007669"/>
    <property type="project" value="InterPro"/>
</dbReference>
<dbReference type="GO" id="GO:0090729">
    <property type="term" value="F:toxin activity"/>
    <property type="evidence" value="ECO:0007669"/>
    <property type="project" value="UniProtKB-KW"/>
</dbReference>
<dbReference type="GO" id="GO:0006952">
    <property type="term" value="P:defense response"/>
    <property type="evidence" value="ECO:0007669"/>
    <property type="project" value="InterPro"/>
</dbReference>
<dbReference type="CDD" id="cd23106">
    <property type="entry name" value="neurotoxins_LC_scorpion"/>
    <property type="match status" value="1"/>
</dbReference>
<dbReference type="Gene3D" id="3.30.30.10">
    <property type="entry name" value="Knottin, scorpion toxin-like"/>
    <property type="match status" value="1"/>
</dbReference>
<dbReference type="InterPro" id="IPR044062">
    <property type="entry name" value="LCN-type_CS_alpha_beta_dom"/>
</dbReference>
<dbReference type="InterPro" id="IPR003614">
    <property type="entry name" value="Scorpion_toxin-like"/>
</dbReference>
<dbReference type="InterPro" id="IPR036574">
    <property type="entry name" value="Scorpion_toxin-like_sf"/>
</dbReference>
<dbReference type="InterPro" id="IPR018218">
    <property type="entry name" value="Scorpion_toxinL"/>
</dbReference>
<dbReference type="InterPro" id="IPR002061">
    <property type="entry name" value="Scorpion_toxinL/defensin"/>
</dbReference>
<dbReference type="Pfam" id="PF00537">
    <property type="entry name" value="Toxin_3"/>
    <property type="match status" value="1"/>
</dbReference>
<dbReference type="PRINTS" id="PR00285">
    <property type="entry name" value="SCORPNTOXIN"/>
</dbReference>
<dbReference type="SMART" id="SM00505">
    <property type="entry name" value="Knot1"/>
    <property type="match status" value="1"/>
</dbReference>
<dbReference type="SUPFAM" id="SSF57095">
    <property type="entry name" value="Scorpion toxin-like"/>
    <property type="match status" value="1"/>
</dbReference>
<dbReference type="PROSITE" id="PS51863">
    <property type="entry name" value="LCN_CSAB"/>
    <property type="match status" value="1"/>
</dbReference>
<accession>P68725</accession>
<feature type="signal peptide" evidence="1">
    <location>
        <begin position="1"/>
        <end position="21"/>
    </location>
</feature>
<feature type="chain" id="PRO_0000035194" description="Insect toxin 2-13">
    <location>
        <begin position="22"/>
        <end position="80"/>
    </location>
</feature>
<feature type="domain" description="LCN-type CS-alpha/beta" evidence="2">
    <location>
        <begin position="22"/>
        <end position="80"/>
    </location>
</feature>
<feature type="modified residue" description="Glycine amide" evidence="1">
    <location>
        <position position="80"/>
    </location>
</feature>
<feature type="disulfide bond" evidence="2">
    <location>
        <begin position="31"/>
        <end position="79"/>
    </location>
</feature>
<feature type="disulfide bond" evidence="2">
    <location>
        <begin position="35"/>
        <end position="56"/>
    </location>
</feature>
<feature type="disulfide bond" evidence="2">
    <location>
        <begin position="42"/>
        <end position="61"/>
    </location>
</feature>
<feature type="disulfide bond" evidence="2">
    <location>
        <begin position="46"/>
        <end position="63"/>
    </location>
</feature>